<protein>
    <recommendedName>
        <fullName>Biogenesis of lysosome-related organelles complex 1 subunit BLS1</fullName>
        <shortName>BLOC-1 subunit BLS1</shortName>
    </recommendedName>
    <alternativeName>
        <fullName>BLOS1-homolog</fullName>
    </alternativeName>
</protein>
<feature type="chain" id="PRO_0000410638" description="Biogenesis of lysosome-related organelles complex 1 subunit BLS1">
    <location>
        <begin position="1"/>
        <end position="122"/>
    </location>
</feature>
<feature type="modified residue" description="Phosphoserine" evidence="2">
    <location>
        <position position="33"/>
    </location>
</feature>
<organism>
    <name type="scientific">Saccharomyces cerevisiae (strain VIN 13)</name>
    <name type="common">Baker's yeast</name>
    <dbReference type="NCBI Taxonomy" id="764099"/>
    <lineage>
        <taxon>Eukaryota</taxon>
        <taxon>Fungi</taxon>
        <taxon>Dikarya</taxon>
        <taxon>Ascomycota</taxon>
        <taxon>Saccharomycotina</taxon>
        <taxon>Saccharomycetes</taxon>
        <taxon>Saccharomycetales</taxon>
        <taxon>Saccharomycetaceae</taxon>
        <taxon>Saccharomyces</taxon>
    </lineage>
</organism>
<evidence type="ECO:0000250" key="1"/>
<evidence type="ECO:0000250" key="2">
    <source>
        <dbReference type="UniProtKB" id="Q06071"/>
    </source>
</evidence>
<evidence type="ECO:0000305" key="3"/>
<sequence>MFLTFSMCVNWIIVKMPNRSEELDRLLDKIINSPHRTEASKTLQEIENNQSYILNVQLKKLLRLHDDSFKNKCVSPINYMLEKYTPYMGHTEALQKEAELVDRDLRILEMTYQLIEKNRNSK</sequence>
<accession>E7LY32</accession>
<gene>
    <name type="primary">BLS1</name>
    <name type="ORF">VIN13_3427</name>
</gene>
<dbReference type="EMBL" id="ADXC01000057">
    <property type="protein sequence ID" value="EGA77689.1"/>
    <property type="status" value="ALT_INIT"/>
    <property type="molecule type" value="Genomic_DNA"/>
</dbReference>
<dbReference type="SMR" id="E7LY32"/>
<dbReference type="HOGENOM" id="CLU_150164_0_0_1"/>
<dbReference type="OrthoDB" id="40475at4893"/>
<dbReference type="GO" id="GO:0005768">
    <property type="term" value="C:endosome"/>
    <property type="evidence" value="ECO:0007669"/>
    <property type="project" value="UniProtKB-SubCell"/>
</dbReference>
<name>BL1S1_YEASV</name>
<proteinExistence type="inferred from homology"/>
<reference key="1">
    <citation type="journal article" date="2011" name="PLoS Genet.">
        <title>Whole-genome comparison reveals novel genetic elements that characterize the genome of industrial strains of Saccharomyces cerevisiae.</title>
        <authorList>
            <person name="Borneman A.R."/>
            <person name="Desany B.A."/>
            <person name="Riches D."/>
            <person name="Affourtit J.P."/>
            <person name="Forgan A.H."/>
            <person name="Pretorius I.S."/>
            <person name="Egholm M."/>
            <person name="Chambers P.J."/>
        </authorList>
    </citation>
    <scope>NUCLEOTIDE SEQUENCE [LARGE SCALE GENOMIC DNA]</scope>
    <source>
        <strain>VIN 13</strain>
    </source>
</reference>
<keyword id="KW-0967">Endosome</keyword>
<keyword id="KW-0597">Phosphoprotein</keyword>
<keyword id="KW-0813">Transport</keyword>
<comment type="function">
    <text evidence="1">Component of the biogenesis of lysosome-related organelles complex-1 (BLOC-1), a complex involved in endosomal cargo sorting.</text>
</comment>
<comment type="subunit">
    <text evidence="1">Component of the biogenesis of lysosome-related organelles complex-1 (BLOC-1) composed of at least BLI1, BLS1, CNL1, KXD1, SNN1 and VAB2.</text>
</comment>
<comment type="subcellular location">
    <subcellularLocation>
        <location evidence="1">Endosome</location>
    </subcellularLocation>
</comment>
<comment type="similarity">
    <text evidence="3">Belongs to the BLOC1S1 family.</text>
</comment>
<comment type="sequence caution" evidence="3">
    <conflict type="erroneous initiation">
        <sequence resource="EMBL-CDS" id="EGA77689"/>
    </conflict>
    <text>Truncated N-terminus.</text>
</comment>